<comment type="function">
    <text>This protein is a Fe-Mo-cofactor biosynthetic component.</text>
</comment>
<comment type="catalytic activity">
    <reaction>
        <text>acetyl-CoA + 2-oxoglutarate + H2O = (2R)-homocitrate + CoA + H(+)</text>
        <dbReference type="Rhea" id="RHEA:12929"/>
        <dbReference type="ChEBI" id="CHEBI:15377"/>
        <dbReference type="ChEBI" id="CHEBI:15378"/>
        <dbReference type="ChEBI" id="CHEBI:16810"/>
        <dbReference type="ChEBI" id="CHEBI:57287"/>
        <dbReference type="ChEBI" id="CHEBI:57288"/>
        <dbReference type="ChEBI" id="CHEBI:58884"/>
        <dbReference type="EC" id="2.3.3.14"/>
    </reaction>
</comment>
<comment type="subunit">
    <text>Heterodimer of an alpha and an omega chain.</text>
</comment>
<comment type="miscellaneous">
    <text>In Clostridium pasteurianum the N-terminal and C-terminal portions of NifV are encoded by two different genes, nifV-alpha and nifV-omega.</text>
</comment>
<comment type="similarity">
    <text evidence="1">Belongs to the alpha-IPM synthase/homocitrate synthase family.</text>
</comment>
<proteinExistence type="inferred from homology"/>
<name>NIFVO_CLOPA</name>
<dbReference type="EC" id="2.3.3.14"/>
<dbReference type="EMBL" id="AY603957">
    <property type="protein sequence ID" value="AAT37649.1"/>
    <property type="molecule type" value="Genomic_DNA"/>
</dbReference>
<dbReference type="PIR" id="A39403">
    <property type="entry name" value="A39403"/>
</dbReference>
<dbReference type="SMR" id="Q00852"/>
<dbReference type="GO" id="GO:0004410">
    <property type="term" value="F:homocitrate synthase activity"/>
    <property type="evidence" value="ECO:0007669"/>
    <property type="project" value="UniProtKB-EC"/>
</dbReference>
<dbReference type="GO" id="GO:0009399">
    <property type="term" value="P:nitrogen fixation"/>
    <property type="evidence" value="ECO:0007669"/>
    <property type="project" value="UniProtKB-KW"/>
</dbReference>
<dbReference type="Gene3D" id="1.10.238.260">
    <property type="match status" value="1"/>
</dbReference>
<dbReference type="InterPro" id="IPR054691">
    <property type="entry name" value="LeuA/HCS_post-cat"/>
</dbReference>
<dbReference type="PANTHER" id="PTHR42880">
    <property type="entry name" value="HOMOCITRATE SYNTHASE"/>
    <property type="match status" value="1"/>
</dbReference>
<dbReference type="PANTHER" id="PTHR42880:SF1">
    <property type="entry name" value="ISOPROPYLMALATE_HOMOCITRATE_CITRAMALATE SYNTHASE FAMILY PROTEIN"/>
    <property type="match status" value="1"/>
</dbReference>
<dbReference type="Pfam" id="PF22617">
    <property type="entry name" value="HCS_D2"/>
    <property type="match status" value="1"/>
</dbReference>
<organism>
    <name type="scientific">Clostridium pasteurianum</name>
    <dbReference type="NCBI Taxonomy" id="1501"/>
    <lineage>
        <taxon>Bacteria</taxon>
        <taxon>Bacillati</taxon>
        <taxon>Bacillota</taxon>
        <taxon>Clostridia</taxon>
        <taxon>Eubacteriales</taxon>
        <taxon>Clostridiaceae</taxon>
        <taxon>Clostridium</taxon>
    </lineage>
</organism>
<reference key="1">
    <citation type="journal article" date="1991" name="J. Bacteriol.">
        <title>The N-terminal and C-terminal portions of NifV are encoded by two different genes in Clostridium pasteurianum.</title>
        <authorList>
            <person name="Wang S.-Z."/>
            <person name="Dean D.R."/>
            <person name="Chen J.-S."/>
            <person name="Johnson J.L."/>
        </authorList>
    </citation>
    <scope>NUCLEOTIDE SEQUENCE [GENOMIC DNA]</scope>
</reference>
<keyword id="KW-0535">Nitrogen fixation</keyword>
<keyword id="KW-0808">Transferase</keyword>
<evidence type="ECO:0000305" key="1"/>
<protein>
    <recommendedName>
        <fullName>Homocitrate synthase, omega subunit</fullName>
        <ecNumber>2.3.3.14</ecNumber>
    </recommendedName>
</protein>
<feature type="chain" id="PRO_0000140468" description="Homocitrate synthase, omega subunit">
    <location>
        <begin position="1"/>
        <end position="352"/>
    </location>
</feature>
<accession>Q00852</accession>
<accession>Q6J2L5</accession>
<gene>
    <name type="primary">nifV-OMEGA</name>
</gene>
<sequence length="352" mass="41578">MAVVMDGVKKNIIDRTIPNLVKKFQNFNNDDIAYFLKLLHETGIDLFEINRDSMDKIKKFPLNLDYIYRIENIEDYNYLNNYNFKYIILNYKTIYRFLLEDEKIQKNLKEHNIILEIDIEDLDELYLSEDNKIFCIFNIVCLRINNLSKLDFIDEDFRIKDLKSKFNVLVDFCASNKYNMATAIIINAFLNGSDIITTEFNSNDYAAMEEVIIALKSIRNIEIRGDLKLISKLTRIYEKITSERVYSMKPILGEDIFKYESGIHADGIAKNPKNYEPFNPELIGTNRKLYIGKHSGKAALVVKFKELNLNCNNIDMNLFLQDIREKSIQEKRNVLDNEIIEMYKEYNKSYQR</sequence>